<proteinExistence type="inferred from homology"/>
<keyword id="KW-0539">Nucleus</keyword>
<keyword id="KW-1185">Reference proteome</keyword>
<keyword id="KW-0677">Repeat</keyword>
<keyword id="KW-0690">Ribosome biogenesis</keyword>
<keyword id="KW-0698">rRNA processing</keyword>
<keyword id="KW-0853">WD repeat</keyword>
<organism>
    <name type="scientific">Laccaria bicolor (strain S238N-H82 / ATCC MYA-4686)</name>
    <name type="common">Bicoloured deceiver</name>
    <name type="synonym">Laccaria laccata var. bicolor</name>
    <dbReference type="NCBI Taxonomy" id="486041"/>
    <lineage>
        <taxon>Eukaryota</taxon>
        <taxon>Fungi</taxon>
        <taxon>Dikarya</taxon>
        <taxon>Basidiomycota</taxon>
        <taxon>Agaricomycotina</taxon>
        <taxon>Agaricomycetes</taxon>
        <taxon>Agaricomycetidae</taxon>
        <taxon>Agaricales</taxon>
        <taxon>Agaricineae</taxon>
        <taxon>Hydnangiaceae</taxon>
        <taxon>Laccaria</taxon>
    </lineage>
</organism>
<reference key="1">
    <citation type="journal article" date="2008" name="Nature">
        <title>The genome of Laccaria bicolor provides insights into mycorrhizal symbiosis.</title>
        <authorList>
            <person name="Martin F."/>
            <person name="Aerts A."/>
            <person name="Ahren D."/>
            <person name="Brun A."/>
            <person name="Danchin E.G.J."/>
            <person name="Duchaussoy F."/>
            <person name="Gibon J."/>
            <person name="Kohler A."/>
            <person name="Lindquist E."/>
            <person name="Pereda V."/>
            <person name="Salamov A."/>
            <person name="Shapiro H.J."/>
            <person name="Wuyts J."/>
            <person name="Blaudez D."/>
            <person name="Buee M."/>
            <person name="Brokstein P."/>
            <person name="Canbaeck B."/>
            <person name="Cohen D."/>
            <person name="Courty P.E."/>
            <person name="Coutinho P.M."/>
            <person name="Delaruelle C."/>
            <person name="Detter J.C."/>
            <person name="Deveau A."/>
            <person name="DiFazio S."/>
            <person name="Duplessis S."/>
            <person name="Fraissinet-Tachet L."/>
            <person name="Lucic E."/>
            <person name="Frey-Klett P."/>
            <person name="Fourrey C."/>
            <person name="Feussner I."/>
            <person name="Gay G."/>
            <person name="Grimwood J."/>
            <person name="Hoegger P.J."/>
            <person name="Jain P."/>
            <person name="Kilaru S."/>
            <person name="Labbe J."/>
            <person name="Lin Y.C."/>
            <person name="Legue V."/>
            <person name="Le Tacon F."/>
            <person name="Marmeisse R."/>
            <person name="Melayah D."/>
            <person name="Montanini B."/>
            <person name="Muratet M."/>
            <person name="Nehls U."/>
            <person name="Niculita-Hirzel H."/>
            <person name="Oudot-Le Secq M.P."/>
            <person name="Peter M."/>
            <person name="Quesneville H."/>
            <person name="Rajashekar B."/>
            <person name="Reich M."/>
            <person name="Rouhier N."/>
            <person name="Schmutz J."/>
            <person name="Yin T."/>
            <person name="Chalot M."/>
            <person name="Henrissat B."/>
            <person name="Kuees U."/>
            <person name="Lucas S."/>
            <person name="Van de Peer Y."/>
            <person name="Podila G.K."/>
            <person name="Polle A."/>
            <person name="Pukkila P.J."/>
            <person name="Richardson P.M."/>
            <person name="Rouze P."/>
            <person name="Sanders I.R."/>
            <person name="Stajich J.E."/>
            <person name="Tunlid A."/>
            <person name="Tuskan G."/>
            <person name="Grigoriev I.V."/>
        </authorList>
    </citation>
    <scope>NUCLEOTIDE SEQUENCE [LARGE SCALE GENOMIC DNA]</scope>
    <source>
        <strain>S238N-H82 / ATCC MYA-4686</strain>
    </source>
</reference>
<feature type="chain" id="PRO_0000369590" description="Ribosome biogenesis protein YTM1">
    <location>
        <begin position="1"/>
        <end position="452"/>
    </location>
</feature>
<feature type="repeat" description="WD 1">
    <location>
        <begin position="110"/>
        <end position="148"/>
    </location>
</feature>
<feature type="repeat" description="WD 2">
    <location>
        <begin position="150"/>
        <end position="195"/>
    </location>
</feature>
<feature type="repeat" description="WD 3">
    <location>
        <begin position="208"/>
        <end position="247"/>
    </location>
</feature>
<feature type="repeat" description="WD 4">
    <location>
        <begin position="282"/>
        <end position="322"/>
    </location>
</feature>
<feature type="repeat" description="WD 5">
    <location>
        <begin position="325"/>
        <end position="364"/>
    </location>
</feature>
<feature type="repeat" description="WD 6">
    <location>
        <begin position="371"/>
        <end position="411"/>
    </location>
</feature>
<feature type="repeat" description="WD 7">
    <location>
        <begin position="418"/>
        <end position="452"/>
    </location>
</feature>
<feature type="region of interest" description="Ubiquitin-like (UBL) domain" evidence="1">
    <location>
        <begin position="17"/>
        <end position="98"/>
    </location>
</feature>
<feature type="region of interest" description="Disordered" evidence="2">
    <location>
        <begin position="245"/>
        <end position="269"/>
    </location>
</feature>
<feature type="compositionally biased region" description="Basic and acidic residues" evidence="2">
    <location>
        <begin position="252"/>
        <end position="269"/>
    </location>
</feature>
<dbReference type="EMBL" id="DS547144">
    <property type="protein sequence ID" value="EDR00964.1"/>
    <property type="molecule type" value="Genomic_DNA"/>
</dbReference>
<dbReference type="RefSeq" id="XP_001888359.1">
    <property type="nucleotide sequence ID" value="XM_001888324.1"/>
</dbReference>
<dbReference type="SMR" id="B0DWM8"/>
<dbReference type="FunCoup" id="B0DWM8">
    <property type="interactions" value="389"/>
</dbReference>
<dbReference type="STRING" id="486041.B0DWM8"/>
<dbReference type="GeneID" id="6084003"/>
<dbReference type="KEGG" id="lbc:LACBIDRAFT_395637"/>
<dbReference type="HOGENOM" id="CLU_000288_57_0_1"/>
<dbReference type="InParanoid" id="B0DWM8"/>
<dbReference type="OrthoDB" id="10251381at2759"/>
<dbReference type="Proteomes" id="UP000001194">
    <property type="component" value="Unassembled WGS sequence"/>
</dbReference>
<dbReference type="GO" id="GO:0005730">
    <property type="term" value="C:nucleolus"/>
    <property type="evidence" value="ECO:0007669"/>
    <property type="project" value="UniProtKB-SubCell"/>
</dbReference>
<dbReference type="GO" id="GO:0005654">
    <property type="term" value="C:nucleoplasm"/>
    <property type="evidence" value="ECO:0007669"/>
    <property type="project" value="UniProtKB-SubCell"/>
</dbReference>
<dbReference type="GO" id="GO:0030687">
    <property type="term" value="C:preribosome, large subunit precursor"/>
    <property type="evidence" value="ECO:0007669"/>
    <property type="project" value="UniProtKB-UniRule"/>
</dbReference>
<dbReference type="GO" id="GO:0043021">
    <property type="term" value="F:ribonucleoprotein complex binding"/>
    <property type="evidence" value="ECO:0007669"/>
    <property type="project" value="UniProtKB-UniRule"/>
</dbReference>
<dbReference type="GO" id="GO:0000466">
    <property type="term" value="P:maturation of 5.8S rRNA from tricistronic rRNA transcript (SSU-rRNA, 5.8S rRNA, LSU-rRNA)"/>
    <property type="evidence" value="ECO:0007669"/>
    <property type="project" value="UniProtKB-UniRule"/>
</dbReference>
<dbReference type="GO" id="GO:0000463">
    <property type="term" value="P:maturation of LSU-rRNA from tricistronic rRNA transcript (SSU-rRNA, 5.8S rRNA, LSU-rRNA)"/>
    <property type="evidence" value="ECO:0007669"/>
    <property type="project" value="UniProtKB-UniRule"/>
</dbReference>
<dbReference type="Gene3D" id="2.130.10.10">
    <property type="entry name" value="YVTN repeat-like/Quinoprotein amine dehydrogenase"/>
    <property type="match status" value="1"/>
</dbReference>
<dbReference type="HAMAP" id="MF_03029">
    <property type="entry name" value="WDR12"/>
    <property type="match status" value="1"/>
</dbReference>
<dbReference type="InterPro" id="IPR012972">
    <property type="entry name" value="NLE"/>
</dbReference>
<dbReference type="InterPro" id="IPR015943">
    <property type="entry name" value="WD40/YVTN_repeat-like_dom_sf"/>
</dbReference>
<dbReference type="InterPro" id="IPR019775">
    <property type="entry name" value="WD40_repeat_CS"/>
</dbReference>
<dbReference type="InterPro" id="IPR036322">
    <property type="entry name" value="WD40_repeat_dom_sf"/>
</dbReference>
<dbReference type="InterPro" id="IPR001680">
    <property type="entry name" value="WD40_rpt"/>
</dbReference>
<dbReference type="InterPro" id="IPR028599">
    <property type="entry name" value="WDR12/Ytm1"/>
</dbReference>
<dbReference type="PANTHER" id="PTHR19855:SF11">
    <property type="entry name" value="RIBOSOME BIOGENESIS PROTEIN WDR12"/>
    <property type="match status" value="1"/>
</dbReference>
<dbReference type="PANTHER" id="PTHR19855">
    <property type="entry name" value="WD40 REPEAT PROTEIN 12, 37"/>
    <property type="match status" value="1"/>
</dbReference>
<dbReference type="Pfam" id="PF08154">
    <property type="entry name" value="NLE"/>
    <property type="match status" value="1"/>
</dbReference>
<dbReference type="Pfam" id="PF00400">
    <property type="entry name" value="WD40"/>
    <property type="match status" value="3"/>
</dbReference>
<dbReference type="SMART" id="SM00320">
    <property type="entry name" value="WD40"/>
    <property type="match status" value="6"/>
</dbReference>
<dbReference type="SUPFAM" id="SSF50978">
    <property type="entry name" value="WD40 repeat-like"/>
    <property type="match status" value="1"/>
</dbReference>
<dbReference type="PROSITE" id="PS00678">
    <property type="entry name" value="WD_REPEATS_1"/>
    <property type="match status" value="1"/>
</dbReference>
<dbReference type="PROSITE" id="PS50082">
    <property type="entry name" value="WD_REPEATS_2"/>
    <property type="match status" value="3"/>
</dbReference>
<dbReference type="PROSITE" id="PS50294">
    <property type="entry name" value="WD_REPEATS_REGION"/>
    <property type="match status" value="2"/>
</dbReference>
<gene>
    <name evidence="1" type="primary">YTM1</name>
    <name type="ORF">LACBIDRAFT_395637</name>
</gene>
<comment type="function">
    <text evidence="1">Component of the NOP7 complex, which is required for maturation of the 25S and 5.8S ribosomal RNAs and formation of the 60S ribosome.</text>
</comment>
<comment type="subunit">
    <text evidence="1">Component of the NOP7 complex, composed of ERB1, NOP7 and YTM1. The complex is held together by ERB1, which interacts with NOP7 via its N-terminal domain and with YTM1 via a high-affinity interaction between the seven-bladed beta-propeller domains of the 2 proteins. The NOP7 complex associates with the 66S pre-ribosome. Interacts (via UBL domain) with MDN1 (via VWFA/MIDAS domain).</text>
</comment>
<comment type="subcellular location">
    <subcellularLocation>
        <location evidence="1">Nucleus</location>
        <location evidence="1">Nucleolus</location>
    </subcellularLocation>
    <subcellularLocation>
        <location evidence="1">Nucleus</location>
        <location evidence="1">Nucleoplasm</location>
    </subcellularLocation>
</comment>
<comment type="similarity">
    <text evidence="1">Belongs to the WD repeat WDR12/YTM1 family.</text>
</comment>
<name>YTM1_LACBS</name>
<evidence type="ECO:0000255" key="1">
    <source>
        <dbReference type="HAMAP-Rule" id="MF_03029"/>
    </source>
</evidence>
<evidence type="ECO:0000256" key="2">
    <source>
        <dbReference type="SAM" id="MobiDB-lite"/>
    </source>
</evidence>
<accession>B0DWM8</accession>
<sequence length="452" mass="49088">MASTSTSANGGSTNASIVSQPVVFTTQTQYPLPYQKYMIPTTWRRYQLSQLVNKALSLVKPVPFDFLIKGEIIRGSLAEWCSEHGVGEEETLEIEYIESVMPPQKMSEIPHEDWVSSVSCQLPRYFLTASYDGNLRAFDLSKNLTASIPAHPAPITSLCLVSSSLLDDNSQQIVIASASHDLTARLTQVALNPMASTNESKAMASLHLHTAPVSSISANAAGTHVLTASWDGLIGYWDATVPSTDEVPEPALNERDRSKKRRRVEEGEVKAKRKAPLSVFKSHTARVSKVLFASGAGETAYSCGFDSTVRRWDTETGVCSHTITASEKPFLDMALTPDGNSALATSTDRSMTLYDLRSSTTILTSASNTYMHPSTPSCVATSATNSHQVVTGAYDGVVRIWDLRSPKSAMATFKPWSGSGQKVLSVDWKRGIVGVGGERGLEMWKVGEEQKV</sequence>
<protein>
    <recommendedName>
        <fullName evidence="1">Ribosome biogenesis protein YTM1</fullName>
    </recommendedName>
</protein>